<evidence type="ECO:0000256" key="1">
    <source>
        <dbReference type="SAM" id="MobiDB-lite"/>
    </source>
</evidence>
<evidence type="ECO:0000269" key="2">
    <source>
    </source>
</evidence>
<evidence type="ECO:0000269" key="3">
    <source>
    </source>
</evidence>
<evidence type="ECO:0000269" key="4">
    <source>
    </source>
</evidence>
<evidence type="ECO:0000305" key="5"/>
<evidence type="ECO:0007744" key="6">
    <source>
    </source>
</evidence>
<evidence type="ECO:0007744" key="7">
    <source>
    </source>
</evidence>
<reference key="1">
    <citation type="journal article" date="2005" name="Nat. Genet.">
        <title>Quantitative trait loci mapped to single-nucleotide resolution in yeast.</title>
        <authorList>
            <person name="Deutschbauer A.M."/>
            <person name="Davis R.W."/>
        </authorList>
    </citation>
    <scope>NUCLEOTIDE SEQUENCE [GENOMIC DNA]</scope>
    <scope>VARIANTS ALA-145; LYS-165 AND SER-569</scope>
    <source>
        <strain>SK1</strain>
    </source>
</reference>
<reference key="2">
    <citation type="journal article" date="1997" name="Nature">
        <title>The nucleotide sequence of Saccharomyces cerevisiae chromosome VII.</title>
        <authorList>
            <person name="Tettelin H."/>
            <person name="Agostoni-Carbone M.L."/>
            <person name="Albermann K."/>
            <person name="Albers M."/>
            <person name="Arroyo J."/>
            <person name="Backes U."/>
            <person name="Barreiros T."/>
            <person name="Bertani I."/>
            <person name="Bjourson A.J."/>
            <person name="Brueckner M."/>
            <person name="Bruschi C.V."/>
            <person name="Carignani G."/>
            <person name="Castagnoli L."/>
            <person name="Cerdan E."/>
            <person name="Clemente M.L."/>
            <person name="Coblenz A."/>
            <person name="Coglievina M."/>
            <person name="Coissac E."/>
            <person name="Defoor E."/>
            <person name="Del Bino S."/>
            <person name="Delius H."/>
            <person name="Delneri D."/>
            <person name="de Wergifosse P."/>
            <person name="Dujon B."/>
            <person name="Durand P."/>
            <person name="Entian K.-D."/>
            <person name="Eraso P."/>
            <person name="Escribano V."/>
            <person name="Fabiani L."/>
            <person name="Fartmann B."/>
            <person name="Feroli F."/>
            <person name="Feuermann M."/>
            <person name="Frontali L."/>
            <person name="Garcia-Gonzalez M."/>
            <person name="Garcia-Saez M.I."/>
            <person name="Goffeau A."/>
            <person name="Guerreiro P."/>
            <person name="Hani J."/>
            <person name="Hansen M."/>
            <person name="Hebling U."/>
            <person name="Hernandez K."/>
            <person name="Heumann K."/>
            <person name="Hilger F."/>
            <person name="Hofmann B."/>
            <person name="Indge K.J."/>
            <person name="James C.M."/>
            <person name="Klima R."/>
            <person name="Koetter P."/>
            <person name="Kramer B."/>
            <person name="Kramer W."/>
            <person name="Lauquin G."/>
            <person name="Leuther H."/>
            <person name="Louis E.J."/>
            <person name="Maillier E."/>
            <person name="Marconi A."/>
            <person name="Martegani E."/>
            <person name="Mazon M.J."/>
            <person name="Mazzoni C."/>
            <person name="McReynolds A.D.K."/>
            <person name="Melchioretto P."/>
            <person name="Mewes H.-W."/>
            <person name="Minenkova O."/>
            <person name="Mueller-Auer S."/>
            <person name="Nawrocki A."/>
            <person name="Netter P."/>
            <person name="Neu R."/>
            <person name="Nombela C."/>
            <person name="Oliver S.G."/>
            <person name="Panzeri L."/>
            <person name="Paoluzi S."/>
            <person name="Plevani P."/>
            <person name="Portetelle D."/>
            <person name="Portillo F."/>
            <person name="Potier S."/>
            <person name="Purnelle B."/>
            <person name="Rieger M."/>
            <person name="Riles L."/>
            <person name="Rinaldi T."/>
            <person name="Robben J."/>
            <person name="Rodrigues-Pousada C."/>
            <person name="Rodriguez-Belmonte E."/>
            <person name="Rodriguez-Torres A.M."/>
            <person name="Rose M."/>
            <person name="Ruzzi M."/>
            <person name="Saliola M."/>
            <person name="Sanchez-Perez M."/>
            <person name="Schaefer B."/>
            <person name="Schaefer M."/>
            <person name="Scharfe M."/>
            <person name="Schmidheini T."/>
            <person name="Schreer A."/>
            <person name="Skala J."/>
            <person name="Souciet J.-L."/>
            <person name="Steensma H.Y."/>
            <person name="Talla E."/>
            <person name="Thierry A."/>
            <person name="Vandenbol M."/>
            <person name="van der Aart Q.J.M."/>
            <person name="Van Dyck L."/>
            <person name="Vanoni M."/>
            <person name="Verhasselt P."/>
            <person name="Voet M."/>
            <person name="Volckaert G."/>
            <person name="Wambutt R."/>
            <person name="Watson M.D."/>
            <person name="Weber N."/>
            <person name="Wedler E."/>
            <person name="Wedler H."/>
            <person name="Wipfli P."/>
            <person name="Wolf K."/>
            <person name="Wright L.F."/>
            <person name="Zaccaria P."/>
            <person name="Zimmermann M."/>
            <person name="Zollner A."/>
            <person name="Kleine K."/>
        </authorList>
    </citation>
    <scope>NUCLEOTIDE SEQUENCE [LARGE SCALE GENOMIC DNA]</scope>
    <source>
        <strain>ATCC 204508 / S288c</strain>
    </source>
</reference>
<reference key="3">
    <citation type="journal article" date="2014" name="G3 (Bethesda)">
        <title>The reference genome sequence of Saccharomyces cerevisiae: Then and now.</title>
        <authorList>
            <person name="Engel S.R."/>
            <person name="Dietrich F.S."/>
            <person name="Fisk D.G."/>
            <person name="Binkley G."/>
            <person name="Balakrishnan R."/>
            <person name="Costanzo M.C."/>
            <person name="Dwight S.S."/>
            <person name="Hitz B.C."/>
            <person name="Karra K."/>
            <person name="Nash R.S."/>
            <person name="Weng S."/>
            <person name="Wong E.D."/>
            <person name="Lloyd P."/>
            <person name="Skrzypek M.S."/>
            <person name="Miyasato S.R."/>
            <person name="Simison M."/>
            <person name="Cherry J.M."/>
        </authorList>
    </citation>
    <scope>GENOME REANNOTATION</scope>
    <source>
        <strain>ATCC 204508 / S288c</strain>
    </source>
</reference>
<reference key="4">
    <citation type="journal article" date="2002" name="J. Biol. Chem.">
        <title>Characterization of mammalian eIF2A and identification of the yeast homolog.</title>
        <authorList>
            <person name="Zoll W.L."/>
            <person name="Horton L.E."/>
            <person name="Komar A.A."/>
            <person name="Hensold J.O."/>
            <person name="Merrick W.C."/>
        </authorList>
    </citation>
    <scope>FUNCTION</scope>
</reference>
<reference key="5">
    <citation type="journal article" date="2005" name="J. Biol. Chem.">
        <title>Novel characteristics of the biological properties of the yeast Saccharomyces cerevisiae eukaryotic initiation factor 2A.</title>
        <authorList>
            <person name="Komar A.A."/>
            <person name="Gross S.R."/>
            <person name="Barth-Baus D."/>
            <person name="Strachan R."/>
            <person name="Hensold J.O."/>
            <person name="Goss Kinzy T."/>
            <person name="Merrick W.C."/>
        </authorList>
    </citation>
    <scope>FUNCTION</scope>
</reference>
<reference key="6">
    <citation type="journal article" date="2007" name="J. Proteome Res.">
        <title>Large-scale phosphorylation analysis of alpha-factor-arrested Saccharomyces cerevisiae.</title>
        <authorList>
            <person name="Li X."/>
            <person name="Gerber S.A."/>
            <person name="Rudner A.D."/>
            <person name="Beausoleil S.A."/>
            <person name="Haas W."/>
            <person name="Villen J."/>
            <person name="Elias J.E."/>
            <person name="Gygi S.P."/>
        </authorList>
    </citation>
    <scope>PHOSPHORYLATION [LARGE SCALE ANALYSIS] AT SER-564</scope>
    <scope>IDENTIFICATION BY MASS SPECTROMETRY [LARGE SCALE ANALYSIS]</scope>
    <source>
        <strain>ADR376</strain>
    </source>
</reference>
<reference key="7">
    <citation type="journal article" date="2008" name="Mol. Cell. Proteomics">
        <title>A multidimensional chromatography technology for in-depth phosphoproteome analysis.</title>
        <authorList>
            <person name="Albuquerque C.P."/>
            <person name="Smolka M.B."/>
            <person name="Payne S.H."/>
            <person name="Bafna V."/>
            <person name="Eng J."/>
            <person name="Zhou H."/>
        </authorList>
    </citation>
    <scope>IDENTIFICATION BY MASS SPECTROMETRY [LARGE SCALE ANALYSIS]</scope>
</reference>
<reference key="8">
    <citation type="journal article" date="2009" name="Science">
        <title>Global analysis of Cdk1 substrate phosphorylation sites provides insights into evolution.</title>
        <authorList>
            <person name="Holt L.J."/>
            <person name="Tuch B.B."/>
            <person name="Villen J."/>
            <person name="Johnson A.D."/>
            <person name="Gygi S.P."/>
            <person name="Morgan D.O."/>
        </authorList>
    </citation>
    <scope>PHOSPHORYLATION [LARGE SCALE ANALYSIS] AT SER-564; SER-567 AND SER-572</scope>
    <scope>IDENTIFICATION BY MASS SPECTROMETRY [LARGE SCALE ANALYSIS]</scope>
</reference>
<dbReference type="EMBL" id="DQ115391">
    <property type="protein sequence ID" value="AAZ22467.1"/>
    <property type="molecule type" value="Genomic_DNA"/>
</dbReference>
<dbReference type="EMBL" id="Z72839">
    <property type="protein sequence ID" value="CAA97054.1"/>
    <property type="molecule type" value="Genomic_DNA"/>
</dbReference>
<dbReference type="EMBL" id="Z72840">
    <property type="protein sequence ID" value="CAA97056.1"/>
    <property type="molecule type" value="Genomic_DNA"/>
</dbReference>
<dbReference type="EMBL" id="BK006941">
    <property type="protein sequence ID" value="DAA08150.1"/>
    <property type="molecule type" value="Genomic_DNA"/>
</dbReference>
<dbReference type="PIR" id="S64348">
    <property type="entry name" value="S64348"/>
</dbReference>
<dbReference type="RefSeq" id="NP_011568.3">
    <property type="nucleotide sequence ID" value="NM_001181183.4"/>
</dbReference>
<dbReference type="SMR" id="P53235"/>
<dbReference type="BioGRID" id="33299">
    <property type="interactions" value="530"/>
</dbReference>
<dbReference type="DIP" id="DIP-5518N"/>
<dbReference type="FunCoup" id="P53235">
    <property type="interactions" value="1438"/>
</dbReference>
<dbReference type="IntAct" id="P53235">
    <property type="interactions" value="68"/>
</dbReference>
<dbReference type="MINT" id="P53235"/>
<dbReference type="STRING" id="4932.YGR054W"/>
<dbReference type="GlyGen" id="P53235">
    <property type="glycosylation" value="1 site"/>
</dbReference>
<dbReference type="iPTMnet" id="P53235"/>
<dbReference type="PaxDb" id="4932-YGR054W"/>
<dbReference type="PeptideAtlas" id="P53235"/>
<dbReference type="EnsemblFungi" id="YGR054W_mRNA">
    <property type="protein sequence ID" value="YGR054W"/>
    <property type="gene ID" value="YGR054W"/>
</dbReference>
<dbReference type="GeneID" id="852945"/>
<dbReference type="KEGG" id="sce:YGR054W"/>
<dbReference type="AGR" id="SGD:S000003286"/>
<dbReference type="SGD" id="S000003286">
    <property type="gene designation" value="YGR054W"/>
</dbReference>
<dbReference type="VEuPathDB" id="FungiDB:YGR054W"/>
<dbReference type="eggNOG" id="KOG2315">
    <property type="taxonomic scope" value="Eukaryota"/>
</dbReference>
<dbReference type="GeneTree" id="ENSGT00730000111053"/>
<dbReference type="HOGENOM" id="CLU_013809_0_1_1"/>
<dbReference type="InParanoid" id="P53235"/>
<dbReference type="OMA" id="RCCAYSP"/>
<dbReference type="OrthoDB" id="2194683at2759"/>
<dbReference type="BioCyc" id="YEAST:G3O-30771-MONOMER"/>
<dbReference type="BioGRID-ORCS" id="852945">
    <property type="hits" value="0 hits in 10 CRISPR screens"/>
</dbReference>
<dbReference type="PRO" id="PR:P53235"/>
<dbReference type="Proteomes" id="UP000002311">
    <property type="component" value="Chromosome VII"/>
</dbReference>
<dbReference type="RNAct" id="P53235">
    <property type="molecule type" value="protein"/>
</dbReference>
<dbReference type="GO" id="GO:0022626">
    <property type="term" value="C:cytosolic ribosome"/>
    <property type="evidence" value="ECO:0000314"/>
    <property type="project" value="SGD"/>
</dbReference>
<dbReference type="GO" id="GO:0022627">
    <property type="term" value="C:cytosolic small ribosomal subunit"/>
    <property type="evidence" value="ECO:0000318"/>
    <property type="project" value="GO_Central"/>
</dbReference>
<dbReference type="GO" id="GO:0003729">
    <property type="term" value="F:mRNA binding"/>
    <property type="evidence" value="ECO:0007005"/>
    <property type="project" value="SGD"/>
</dbReference>
<dbReference type="GO" id="GO:0043022">
    <property type="term" value="F:ribosome binding"/>
    <property type="evidence" value="ECO:0000318"/>
    <property type="project" value="GO_Central"/>
</dbReference>
<dbReference type="GO" id="GO:0003743">
    <property type="term" value="F:translation initiation factor activity"/>
    <property type="evidence" value="ECO:0000314"/>
    <property type="project" value="SGD"/>
</dbReference>
<dbReference type="GO" id="GO:0000049">
    <property type="term" value="F:tRNA binding"/>
    <property type="evidence" value="ECO:0000318"/>
    <property type="project" value="GO_Central"/>
</dbReference>
<dbReference type="GO" id="GO:0017148">
    <property type="term" value="P:negative regulation of translation"/>
    <property type="evidence" value="ECO:0000315"/>
    <property type="project" value="SGD"/>
</dbReference>
<dbReference type="GO" id="GO:0006413">
    <property type="term" value="P:translational initiation"/>
    <property type="evidence" value="ECO:0000314"/>
    <property type="project" value="SGD"/>
</dbReference>
<dbReference type="FunFam" id="2.130.10.10:FF:000596">
    <property type="entry name" value="Eukaryotic translation initiation factor 2A"/>
    <property type="match status" value="1"/>
</dbReference>
<dbReference type="Gene3D" id="2.130.10.10">
    <property type="entry name" value="YVTN repeat-like/Quinoprotein amine dehydrogenase"/>
    <property type="match status" value="1"/>
</dbReference>
<dbReference type="InterPro" id="IPR011387">
    <property type="entry name" value="TIF2A"/>
</dbReference>
<dbReference type="InterPro" id="IPR013979">
    <property type="entry name" value="TIF_beta_prop-like"/>
</dbReference>
<dbReference type="InterPro" id="IPR015943">
    <property type="entry name" value="WD40/YVTN_repeat-like_dom_sf"/>
</dbReference>
<dbReference type="PANTHER" id="PTHR13227">
    <property type="entry name" value="EUKARYOTIC TRANSLATION INITIATION FACTOR 2A"/>
    <property type="match status" value="1"/>
</dbReference>
<dbReference type="PANTHER" id="PTHR13227:SF0">
    <property type="entry name" value="EUKARYOTIC TRANSLATION INITIATION FACTOR 2A"/>
    <property type="match status" value="1"/>
</dbReference>
<dbReference type="Pfam" id="PF08662">
    <property type="entry name" value="eIF2A"/>
    <property type="match status" value="1"/>
</dbReference>
<dbReference type="PIRSF" id="PIRSF017222">
    <property type="entry name" value="eIF2A"/>
    <property type="match status" value="1"/>
</dbReference>
<dbReference type="SUPFAM" id="SSF82171">
    <property type="entry name" value="DPP6 N-terminal domain-like"/>
    <property type="match status" value="1"/>
</dbReference>
<organism>
    <name type="scientific">Saccharomyces cerevisiae (strain ATCC 204508 / S288c)</name>
    <name type="common">Baker's yeast</name>
    <dbReference type="NCBI Taxonomy" id="559292"/>
    <lineage>
        <taxon>Eukaryota</taxon>
        <taxon>Fungi</taxon>
        <taxon>Dikarya</taxon>
        <taxon>Ascomycota</taxon>
        <taxon>Saccharomycotina</taxon>
        <taxon>Saccharomycetes</taxon>
        <taxon>Saccharomycetales</taxon>
        <taxon>Saccharomycetaceae</taxon>
        <taxon>Saccharomyces</taxon>
    </lineage>
</organism>
<protein>
    <recommendedName>
        <fullName>Eukaryotic translation initiation factor 2A</fullName>
        <shortName>eIF-2A</shortName>
    </recommendedName>
</protein>
<accession>P53235</accession>
<accession>D6VUI9</accession>
<accession>Q45U32</accession>
<gene>
    <name type="ordered locus">YGR054W</name>
</gene>
<keyword id="KW-0396">Initiation factor</keyword>
<keyword id="KW-0597">Phosphoprotein</keyword>
<keyword id="KW-0648">Protein biosynthesis</keyword>
<keyword id="KW-1185">Reference proteome</keyword>
<keyword id="KW-0677">Repeat</keyword>
<keyword id="KW-0810">Translation regulation</keyword>
<keyword id="KW-0832">Ubl conjugation</keyword>
<keyword id="KW-0853">WD repeat</keyword>
<proteinExistence type="evidence at protein level"/>
<comment type="function">
    <text evidence="2 3">Functions in the early steps of protein synthesis of a small number of specific mRNAs. Acts by directing the binding of methionyl-tRNAi to 40S ribosomal subunits. In contrast to the eIF-2 complex, it binds methionyl-tRNAi to 40S subunits in a codon-dependent manner, whereas the eIF-2 complex binds methionyl-tRNAi to 40S subunits in a GTP-dependent manner. Specifically associates with both 40S subunits and 80S ribosomes.</text>
</comment>
<comment type="interaction">
    <interactant intactId="EBI-23172">
        <id>P53235</id>
    </interactant>
    <interactant intactId="EBI-8973">
        <id>P06103</id>
        <label>PRT1</label>
    </interactant>
    <organismsDiffer>false</organismsDiffer>
    <experiments>3</experiments>
</comment>
<comment type="PTM">
    <text evidence="3">Ubiquitinated, probably leading to its degradation. May explain why it has a short half-life of 17 minutes.</text>
</comment>
<comment type="similarity">
    <text evidence="5">Belongs to the WD repeat EIF2A family.</text>
</comment>
<name>EIF2A_YEAST</name>
<sequence>MSSQFFLKTSQDIELFQSYPTFEQSNTNSKDFPVISSVLSPCGRFLALSTKENVKVFTGPCLDNVLLTMKLSDVYDLHFSPAGNYLSTWERASIQDPNHKNVKVWYLNKPFKKDCVSEDIVPAYEYQAKSQSGWFLQFSKLDNYGLRLFKHDLKIVKLSSANADNFDFQSPFAVLSDDETSQHFTTYLISPAEHPTICTFTPEKGGKPAQLIIWALSEGKITKKIASKTFFKADSCQLKWNPLGNAILCLAITDFDSSNKSYYGENTLYLLSFQGVNGTLGGNSVRVSLTTGPVHDFTWSPTSRQFGVIAGYMPATISFFDLRGNVVHSLPQQAKNTMLFSPSGHYILIAGFGNLQGSVEILDRLDKFKCVSKFDATNTSVCKWSPGGEFIMTATTSPRLRVDNGVKIWHVSGSLVFVKEFKELLKVDWRSPCNYKTLENKDEAFFENHIINNWEPLPDSTTSSLDPKISNKSELQIHSSVQEYISQHPSREASSNGNGSKAKAGGAYKPPHARRTGGGRIVPGVPPGAAKKTIPGLVPGMSANKDANTKNRRRRANKKSSETSPDSTPAPSAPASTNAPTNNKETSPEEKKIRSLLKKLRAIETLKERQAVGDKLEDTQVLKIQTEEKVLKDLEKLGWKDE</sequence>
<feature type="chain" id="PRO_0000202800" description="Eukaryotic translation initiation factor 2A">
    <location>
        <begin position="1"/>
        <end position="642"/>
    </location>
</feature>
<feature type="repeat" description="WD 1">
    <location>
        <begin position="69"/>
        <end position="115"/>
    </location>
</feature>
<feature type="repeat" description="WD 2">
    <location>
        <begin position="186"/>
        <end position="224"/>
    </location>
</feature>
<feature type="repeat" description="WD 3">
    <location>
        <begin position="289"/>
        <end position="331"/>
    </location>
</feature>
<feature type="repeat" description="WD 4">
    <location>
        <begin position="374"/>
        <end position="419"/>
    </location>
</feature>
<feature type="region of interest" description="Disordered" evidence="1">
    <location>
        <begin position="485"/>
        <end position="593"/>
    </location>
</feature>
<feature type="compositionally biased region" description="Low complexity" evidence="1">
    <location>
        <begin position="493"/>
        <end position="507"/>
    </location>
</feature>
<feature type="compositionally biased region" description="Low complexity" evidence="1">
    <location>
        <begin position="563"/>
        <end position="583"/>
    </location>
</feature>
<feature type="modified residue" description="Phosphoserine" evidence="6 7">
    <location>
        <position position="564"/>
    </location>
</feature>
<feature type="modified residue" description="Phosphoserine" evidence="7">
    <location>
        <position position="567"/>
    </location>
</feature>
<feature type="modified residue" description="Phosphoserine" evidence="7">
    <location>
        <position position="572"/>
    </location>
</feature>
<feature type="sequence variant" description="In strain: SK1." evidence="4">
    <original>G</original>
    <variation>A</variation>
    <location>
        <position position="145"/>
    </location>
</feature>
<feature type="sequence variant" description="In strain: SK1." evidence="4">
    <original>N</original>
    <variation>K</variation>
    <location>
        <position position="165"/>
    </location>
</feature>
<feature type="sequence variant" description="In strain: SK1." evidence="4">
    <original>P</original>
    <variation>S</variation>
    <location>
        <position position="569"/>
    </location>
</feature>